<accession>Q0Q468</accession>
<name>NCAP_BC279</name>
<reference key="1">
    <citation type="journal article" date="2006" name="J. Virol.">
        <title>Prevalence and genetic diversity of coronaviruses in bats from China.</title>
        <authorList>
            <person name="Tang X.C."/>
            <person name="Zhang J.X."/>
            <person name="Zhang S.Y."/>
            <person name="Wang P."/>
            <person name="Fan X.H."/>
            <person name="Li L.F."/>
            <person name="Li G."/>
            <person name="Dong B.Q."/>
            <person name="Liu W."/>
            <person name="Cheung C.L."/>
            <person name="Xu K.M."/>
            <person name="Song W.J."/>
            <person name="Vijaykrishna D."/>
            <person name="Poon L.L.M."/>
            <person name="Peiris J.S.M."/>
            <person name="Smith G.J."/>
            <person name="Chen H."/>
            <person name="Guan Y."/>
        </authorList>
    </citation>
    <scope>NUCLEOTIDE SEQUENCE [GENOMIC RNA]</scope>
</reference>
<proteinExistence type="inferred from homology"/>
<organismHost>
    <name type="scientific">Rhinolophus macrotis</name>
    <name type="common">Big-eared horseshoe bat</name>
    <dbReference type="NCBI Taxonomy" id="196889"/>
</organismHost>
<organism>
    <name type="scientific">Bat coronavirus 279/2005</name>
    <name type="common">BtCoV</name>
    <name type="synonym">BtCoV/279/2005</name>
    <dbReference type="NCBI Taxonomy" id="389167"/>
    <lineage>
        <taxon>Viruses</taxon>
        <taxon>Riboviria</taxon>
        <taxon>Orthornavirae</taxon>
        <taxon>Pisuviricota</taxon>
        <taxon>Pisoniviricetes</taxon>
        <taxon>Nidovirales</taxon>
        <taxon>Cornidovirineae</taxon>
        <taxon>Coronaviridae</taxon>
        <taxon>Orthocoronavirinae</taxon>
        <taxon>Betacoronavirus</taxon>
        <taxon>Sarbecovirus</taxon>
        <taxon>Severe acute respiratory syndrome coronavirus</taxon>
    </lineage>
</organism>
<sequence>MSDNGPQNQRSAPRITFGGPSDSTDNNQDGGRSGARPKQRRPQGLPNNTASWFTALTQHGKEELRFPRGQGVPINTNSGKDDQIGYYRRATRRVRGGDGKMKKLSPRWYFYYLGTGPEASLPYGANKEGIVWVATEGALNTPKDHIGTRNPNNNAAIVLQLPQGTTLPKGFYAEGSRGGSQASSRSSSRSRGNSRNSTPGSSRGNSPARMASGSGETALALLLLDRLNQLESKVSGKGQQQQGQTVTKKSAAEASKKPRQKRTATKSYNVTQAFGRRGPEQTQGNFGDQDLIRQGTDYKYWPQIAQFAPSASAFFGMSRIGMEVTPLGTWLTYHGAIKLDDKDPQFKDNVILLNKHIDAYKAFPPTEPKKDKKKKTDEAQPLPQRKKQPTVTLLPAADMDDFSRQLQNSMSGASADSTQA</sequence>
<keyword id="KW-0013">ADP-ribosylation</keyword>
<keyword id="KW-1040">Host Golgi apparatus</keyword>
<keyword id="KW-0597">Phosphoprotein</keyword>
<keyword id="KW-0687">Ribonucleoprotein</keyword>
<keyword id="KW-0694">RNA-binding</keyword>
<keyword id="KW-0804">Transcription</keyword>
<keyword id="KW-0805">Transcription regulation</keyword>
<keyword id="KW-0543">Viral nucleoprotein</keyword>
<keyword id="KW-0946">Virion</keyword>
<evidence type="ECO:0000250" key="1">
    <source>
        <dbReference type="UniProtKB" id="P0DTC9"/>
    </source>
</evidence>
<evidence type="ECO:0000255" key="2">
    <source>
        <dbReference type="HAMAP-Rule" id="MF_04096"/>
    </source>
</evidence>
<evidence type="ECO:0000255" key="3">
    <source>
        <dbReference type="PROSITE-ProRule" id="PRU01276"/>
    </source>
</evidence>
<evidence type="ECO:0000255" key="4">
    <source>
        <dbReference type="PROSITE-ProRule" id="PRU01277"/>
    </source>
</evidence>
<evidence type="ECO:0000256" key="5">
    <source>
        <dbReference type="SAM" id="MobiDB-lite"/>
    </source>
</evidence>
<dbReference type="EMBL" id="DQ648857">
    <property type="protein sequence ID" value="ABG47076.1"/>
    <property type="molecule type" value="Genomic_RNA"/>
</dbReference>
<dbReference type="SMR" id="Q0Q468"/>
<dbReference type="Proteomes" id="UP000006573">
    <property type="component" value="Genome"/>
</dbReference>
<dbReference type="GO" id="GO:0044172">
    <property type="term" value="C:host cell endoplasmic reticulum-Golgi intermediate compartment"/>
    <property type="evidence" value="ECO:0007669"/>
    <property type="project" value="UniProtKB-SubCell"/>
</dbReference>
<dbReference type="GO" id="GO:0044177">
    <property type="term" value="C:host cell Golgi apparatus"/>
    <property type="evidence" value="ECO:0007669"/>
    <property type="project" value="UniProtKB-SubCell"/>
</dbReference>
<dbReference type="GO" id="GO:1990904">
    <property type="term" value="C:ribonucleoprotein complex"/>
    <property type="evidence" value="ECO:0007669"/>
    <property type="project" value="UniProtKB-KW"/>
</dbReference>
<dbReference type="GO" id="GO:0019013">
    <property type="term" value="C:viral nucleocapsid"/>
    <property type="evidence" value="ECO:0007669"/>
    <property type="project" value="UniProtKB-UniRule"/>
</dbReference>
<dbReference type="GO" id="GO:0003723">
    <property type="term" value="F:RNA binding"/>
    <property type="evidence" value="ECO:0007669"/>
    <property type="project" value="UniProtKB-UniRule"/>
</dbReference>
<dbReference type="CDD" id="cd21595">
    <property type="entry name" value="CoV_N-CTD"/>
    <property type="match status" value="1"/>
</dbReference>
<dbReference type="CDD" id="cd21554">
    <property type="entry name" value="CoV_N-NTD"/>
    <property type="match status" value="1"/>
</dbReference>
<dbReference type="HAMAP" id="MF_04096">
    <property type="entry name" value="BETA_CORONA_NCAP"/>
    <property type="match status" value="1"/>
</dbReference>
<dbReference type="InterPro" id="IPR044344">
    <property type="entry name" value="N_prot_C_CoV"/>
</dbReference>
<dbReference type="InterPro" id="IPR044345">
    <property type="entry name" value="N_prot_N_CoV"/>
</dbReference>
<dbReference type="InterPro" id="IPR043505">
    <property type="entry name" value="NCAP_bCoV"/>
</dbReference>
<dbReference type="InterPro" id="IPR001218">
    <property type="entry name" value="Nucleocap_CoV"/>
</dbReference>
<dbReference type="InterPro" id="IPR037179">
    <property type="entry name" value="Nucleocapsid_C"/>
</dbReference>
<dbReference type="InterPro" id="IPR037195">
    <property type="entry name" value="Nucleocapsid_N"/>
</dbReference>
<dbReference type="Pfam" id="PF00937">
    <property type="entry name" value="CoV_nucleocap"/>
    <property type="match status" value="1"/>
</dbReference>
<dbReference type="PIRSF" id="PIRSF003888">
    <property type="entry name" value="Corona_nucleocap"/>
    <property type="match status" value="1"/>
</dbReference>
<dbReference type="SUPFAM" id="SSF110304">
    <property type="entry name" value="Coronavirus RNA-binding domain"/>
    <property type="match status" value="1"/>
</dbReference>
<dbReference type="SUPFAM" id="SSF103068">
    <property type="entry name" value="Nucleocapsid protein dimerization domain"/>
    <property type="match status" value="1"/>
</dbReference>
<dbReference type="PROSITE" id="PS51929">
    <property type="entry name" value="COV_N_CTD"/>
    <property type="match status" value="1"/>
</dbReference>
<dbReference type="PROSITE" id="PS51928">
    <property type="entry name" value="COV_N_NTD"/>
    <property type="match status" value="1"/>
</dbReference>
<comment type="function">
    <text evidence="2">Packages the positive strand viral genome RNA into a helical ribonucleocapsid (RNP) and plays a fundamental role during virion assembly through its interactions with the viral genome and membrane protein M. Plays an important role in enhancing the efficiency of subgenomic viral RNA transcription as well as viral replication.</text>
</comment>
<comment type="subunit">
    <text evidence="2">Homooligomer. Both monomeric and oligomeric forms interact with RNA. Interacts with protein M. Interacts with NSP3; this interaction serves to tether the genome to the newly translated replicase-transcriptase complex at a very early stage of infection.</text>
</comment>
<comment type="subcellular location">
    <subcellularLocation>
        <location evidence="2">Virion</location>
    </subcellularLocation>
    <subcellularLocation>
        <location evidence="2">Host endoplasmic reticulum-Golgi intermediate compartment</location>
    </subcellularLocation>
    <subcellularLocation>
        <location evidence="2">Host Golgi apparatus</location>
    </subcellularLocation>
    <text evidence="2">Located inside the virion, complexed with the viral RNA. Probably associates with ER-derived membranes where it participates in viral RNA synthesis and virus budding.</text>
</comment>
<comment type="PTM">
    <text evidence="2">ADP-ribosylated. The ADP-ribosylation is retained in the virion during infection.</text>
</comment>
<comment type="PTM">
    <text evidence="2">Phosphorylated on serine and threonine residues.</text>
</comment>
<comment type="similarity">
    <text evidence="2">Belongs to the betacoronavirus nucleocapsid protein family.</text>
</comment>
<protein>
    <recommendedName>
        <fullName evidence="2">Nucleoprotein</fullName>
    </recommendedName>
    <alternativeName>
        <fullName evidence="2">Nucleocapsid protein</fullName>
        <shortName evidence="2">NC</shortName>
        <shortName evidence="2">Protein N</shortName>
    </alternativeName>
</protein>
<feature type="chain" id="PRO_0000289883" description="Nucleoprotein">
    <location>
        <begin position="1"/>
        <end position="420"/>
    </location>
</feature>
<feature type="domain" description="CoV N NTD" evidence="3">
    <location>
        <begin position="48"/>
        <end position="175"/>
    </location>
</feature>
<feature type="domain" description="CoV N CTD" evidence="4">
    <location>
        <begin position="247"/>
        <end position="364"/>
    </location>
</feature>
<feature type="region of interest" description="Disordered" evidence="5">
    <location>
        <begin position="1"/>
        <end position="49"/>
    </location>
</feature>
<feature type="region of interest" description="RNA-binding" evidence="2">
    <location>
        <begin position="41"/>
        <end position="186"/>
    </location>
</feature>
<feature type="region of interest" description="Disordered" evidence="5">
    <location>
        <begin position="168"/>
        <end position="214"/>
    </location>
</feature>
<feature type="region of interest" description="Disordered" evidence="5">
    <location>
        <begin position="233"/>
        <end position="286"/>
    </location>
</feature>
<feature type="region of interest" description="Dimerization" evidence="2">
    <location>
        <begin position="258"/>
        <end position="361"/>
    </location>
</feature>
<feature type="region of interest" description="Disordered" evidence="5">
    <location>
        <begin position="362"/>
        <end position="420"/>
    </location>
</feature>
<feature type="compositionally biased region" description="Polar residues" evidence="5">
    <location>
        <begin position="1"/>
        <end position="11"/>
    </location>
</feature>
<feature type="compositionally biased region" description="Polar residues" evidence="5">
    <location>
        <begin position="21"/>
        <end position="30"/>
    </location>
</feature>
<feature type="compositionally biased region" description="Low complexity" evidence="5">
    <location>
        <begin position="179"/>
        <end position="206"/>
    </location>
</feature>
<feature type="compositionally biased region" description="Low complexity" evidence="5">
    <location>
        <begin position="233"/>
        <end position="249"/>
    </location>
</feature>
<feature type="compositionally biased region" description="Basic and acidic residues" evidence="5">
    <location>
        <begin position="367"/>
        <end position="378"/>
    </location>
</feature>
<feature type="compositionally biased region" description="Polar residues" evidence="5">
    <location>
        <begin position="404"/>
        <end position="420"/>
    </location>
</feature>
<feature type="binding site" evidence="1">
    <location>
        <position position="92"/>
    </location>
    <ligand>
        <name>RNA</name>
        <dbReference type="ChEBI" id="CHEBI:33697"/>
    </ligand>
</feature>
<feature type="binding site" evidence="1">
    <location>
        <position position="107"/>
    </location>
    <ligand>
        <name>RNA</name>
        <dbReference type="ChEBI" id="CHEBI:33697"/>
    </ligand>
</feature>
<feature type="binding site" evidence="1">
    <location>
        <position position="149"/>
    </location>
    <ligand>
        <name>RNA</name>
        <dbReference type="ChEBI" id="CHEBI:33697"/>
    </ligand>
</feature>
<feature type="modified residue" description="Phosphoserine; by host" evidence="2">
    <location>
        <position position="176"/>
    </location>
</feature>
<gene>
    <name evidence="2" type="primary">N</name>
    <name type="ORF">9a</name>
</gene>